<protein>
    <recommendedName>
        <fullName evidence="1">Holliday junction resolvase RecU</fullName>
        <ecNumber evidence="1">3.1.21.10</ecNumber>
    </recommendedName>
    <alternativeName>
        <fullName evidence="1">Recombination protein U homolog</fullName>
    </alternativeName>
</protein>
<keyword id="KW-0963">Cytoplasm</keyword>
<keyword id="KW-0227">DNA damage</keyword>
<keyword id="KW-0233">DNA recombination</keyword>
<keyword id="KW-0234">DNA repair</keyword>
<keyword id="KW-0255">Endonuclease</keyword>
<keyword id="KW-0378">Hydrolase</keyword>
<keyword id="KW-0460">Magnesium</keyword>
<keyword id="KW-0479">Metal-binding</keyword>
<keyword id="KW-0540">Nuclease</keyword>
<gene>
    <name evidence="1" type="primary">recU</name>
    <name type="ordered locus">SAV1449</name>
</gene>
<organism>
    <name type="scientific">Staphylococcus aureus (strain Mu50 / ATCC 700699)</name>
    <dbReference type="NCBI Taxonomy" id="158878"/>
    <lineage>
        <taxon>Bacteria</taxon>
        <taxon>Bacillati</taxon>
        <taxon>Bacillota</taxon>
        <taxon>Bacilli</taxon>
        <taxon>Bacillales</taxon>
        <taxon>Staphylococcaceae</taxon>
        <taxon>Staphylococcus</taxon>
    </lineage>
</organism>
<proteinExistence type="inferred from homology"/>
<dbReference type="EC" id="3.1.21.10" evidence="1"/>
<dbReference type="EMBL" id="BA000017">
    <property type="protein sequence ID" value="BAB57611.1"/>
    <property type="molecule type" value="Genomic_DNA"/>
</dbReference>
<dbReference type="RefSeq" id="WP_001108889.1">
    <property type="nucleotide sequence ID" value="NC_002758.2"/>
</dbReference>
<dbReference type="SMR" id="P68816"/>
<dbReference type="KEGG" id="sav:SAV1449"/>
<dbReference type="HOGENOM" id="CLU_096340_0_0_9"/>
<dbReference type="PhylomeDB" id="P68816"/>
<dbReference type="Proteomes" id="UP000002481">
    <property type="component" value="Chromosome"/>
</dbReference>
<dbReference type="GO" id="GO:0005737">
    <property type="term" value="C:cytoplasm"/>
    <property type="evidence" value="ECO:0007669"/>
    <property type="project" value="UniProtKB-SubCell"/>
</dbReference>
<dbReference type="GO" id="GO:0004519">
    <property type="term" value="F:endonuclease activity"/>
    <property type="evidence" value="ECO:0007669"/>
    <property type="project" value="UniProtKB-UniRule"/>
</dbReference>
<dbReference type="GO" id="GO:0000287">
    <property type="term" value="F:magnesium ion binding"/>
    <property type="evidence" value="ECO:0007669"/>
    <property type="project" value="UniProtKB-UniRule"/>
</dbReference>
<dbReference type="GO" id="GO:0003676">
    <property type="term" value="F:nucleic acid binding"/>
    <property type="evidence" value="ECO:0007669"/>
    <property type="project" value="InterPro"/>
</dbReference>
<dbReference type="GO" id="GO:0007059">
    <property type="term" value="P:chromosome segregation"/>
    <property type="evidence" value="ECO:0007669"/>
    <property type="project" value="UniProtKB-UniRule"/>
</dbReference>
<dbReference type="GO" id="GO:0006310">
    <property type="term" value="P:DNA recombination"/>
    <property type="evidence" value="ECO:0007669"/>
    <property type="project" value="UniProtKB-UniRule"/>
</dbReference>
<dbReference type="GO" id="GO:0006281">
    <property type="term" value="P:DNA repair"/>
    <property type="evidence" value="ECO:0007669"/>
    <property type="project" value="UniProtKB-UniRule"/>
</dbReference>
<dbReference type="CDD" id="cd22354">
    <property type="entry name" value="RecU-like"/>
    <property type="match status" value="1"/>
</dbReference>
<dbReference type="Gene3D" id="3.40.1350.10">
    <property type="match status" value="1"/>
</dbReference>
<dbReference type="HAMAP" id="MF_00130">
    <property type="entry name" value="RecU"/>
    <property type="match status" value="1"/>
</dbReference>
<dbReference type="InterPro" id="IPR004612">
    <property type="entry name" value="Resolv_RecU"/>
</dbReference>
<dbReference type="InterPro" id="IPR011335">
    <property type="entry name" value="Restrct_endonuc-II-like"/>
</dbReference>
<dbReference type="InterPro" id="IPR011856">
    <property type="entry name" value="tRNA_endonuc-like_dom_sf"/>
</dbReference>
<dbReference type="NCBIfam" id="NF002581">
    <property type="entry name" value="PRK02234.1-2"/>
    <property type="match status" value="1"/>
</dbReference>
<dbReference type="NCBIfam" id="NF002583">
    <property type="entry name" value="PRK02234.1-4"/>
    <property type="match status" value="1"/>
</dbReference>
<dbReference type="NCBIfam" id="NF002584">
    <property type="entry name" value="PRK02234.1-5"/>
    <property type="match status" value="1"/>
</dbReference>
<dbReference type="NCBIfam" id="TIGR00648">
    <property type="entry name" value="recU"/>
    <property type="match status" value="1"/>
</dbReference>
<dbReference type="Pfam" id="PF03838">
    <property type="entry name" value="RecU"/>
    <property type="match status" value="1"/>
</dbReference>
<dbReference type="PIRSF" id="PIRSF037785">
    <property type="entry name" value="RecU"/>
    <property type="match status" value="1"/>
</dbReference>
<dbReference type="SUPFAM" id="SSF52980">
    <property type="entry name" value="Restriction endonuclease-like"/>
    <property type="match status" value="1"/>
</dbReference>
<reference key="1">
    <citation type="journal article" date="2001" name="Lancet">
        <title>Whole genome sequencing of meticillin-resistant Staphylococcus aureus.</title>
        <authorList>
            <person name="Kuroda M."/>
            <person name="Ohta T."/>
            <person name="Uchiyama I."/>
            <person name="Baba T."/>
            <person name="Yuzawa H."/>
            <person name="Kobayashi I."/>
            <person name="Cui L."/>
            <person name="Oguchi A."/>
            <person name="Aoki K."/>
            <person name="Nagai Y."/>
            <person name="Lian J.-Q."/>
            <person name="Ito T."/>
            <person name="Kanamori M."/>
            <person name="Matsumaru H."/>
            <person name="Maruyama A."/>
            <person name="Murakami H."/>
            <person name="Hosoyama A."/>
            <person name="Mizutani-Ui Y."/>
            <person name="Takahashi N.K."/>
            <person name="Sawano T."/>
            <person name="Inoue R."/>
            <person name="Kaito C."/>
            <person name="Sekimizu K."/>
            <person name="Hirakawa H."/>
            <person name="Kuhara S."/>
            <person name="Goto S."/>
            <person name="Yabuzaki J."/>
            <person name="Kanehisa M."/>
            <person name="Yamashita A."/>
            <person name="Oshima K."/>
            <person name="Furuya K."/>
            <person name="Yoshino C."/>
            <person name="Shiba T."/>
            <person name="Hattori M."/>
            <person name="Ogasawara N."/>
            <person name="Hayashi H."/>
            <person name="Hiramatsu K."/>
        </authorList>
    </citation>
    <scope>NUCLEOTIDE SEQUENCE [LARGE SCALE GENOMIC DNA]</scope>
    <source>
        <strain>Mu50 / ATCC 700699</strain>
    </source>
</reference>
<accession>P68816</accession>
<accession>Q9ZAG8</accession>
<name>RECU_STAAM</name>
<feature type="chain" id="PRO_0000212303" description="Holliday junction resolvase RecU">
    <location>
        <begin position="1"/>
        <end position="208"/>
    </location>
</feature>
<feature type="binding site" evidence="1">
    <location>
        <position position="87"/>
    </location>
    <ligand>
        <name>Mg(2+)</name>
        <dbReference type="ChEBI" id="CHEBI:18420"/>
    </ligand>
</feature>
<feature type="binding site" evidence="1">
    <location>
        <position position="89"/>
    </location>
    <ligand>
        <name>Mg(2+)</name>
        <dbReference type="ChEBI" id="CHEBI:18420"/>
    </ligand>
</feature>
<feature type="binding site" evidence="1">
    <location>
        <position position="102"/>
    </location>
    <ligand>
        <name>Mg(2+)</name>
        <dbReference type="ChEBI" id="CHEBI:18420"/>
    </ligand>
</feature>
<feature type="binding site" evidence="1">
    <location>
        <position position="121"/>
    </location>
    <ligand>
        <name>Mg(2+)</name>
        <dbReference type="ChEBI" id="CHEBI:18420"/>
    </ligand>
</feature>
<feature type="site" description="Transition state stabilizer" evidence="1">
    <location>
        <position position="104"/>
    </location>
</feature>
<comment type="function">
    <text evidence="1">Endonuclease that resolves Holliday junction intermediates in genetic recombination. Cleaves mobile four-strand junctions by introducing symmetrical nicks in paired strands. Promotes annealing of linear ssDNA with homologous dsDNA. Required for DNA repair, homologous recombination and chromosome segregation.</text>
</comment>
<comment type="catalytic activity">
    <reaction evidence="1">
        <text>Endonucleolytic cleavage at a junction such as a reciprocal single-stranded crossover between two homologous DNA duplexes (Holliday junction).</text>
        <dbReference type="EC" id="3.1.21.10"/>
    </reaction>
</comment>
<comment type="cofactor">
    <cofactor evidence="1">
        <name>Mg(2+)</name>
        <dbReference type="ChEBI" id="CHEBI:18420"/>
    </cofactor>
    <text evidence="1">Binds 1 Mg(2+) ion per subunit.</text>
</comment>
<comment type="subcellular location">
    <subcellularLocation>
        <location evidence="1">Cytoplasm</location>
    </subcellularLocation>
</comment>
<comment type="similarity">
    <text evidence="1">Belongs to the RecU family.</text>
</comment>
<evidence type="ECO:0000255" key="1">
    <source>
        <dbReference type="HAMAP-Rule" id="MF_00130"/>
    </source>
</evidence>
<sequence>MNYPNGKPYRKNSAIDGGKKTAAFSNIEYGGRGMSLEKDIEHSNTFYLKSDIAVIHKKPTPVQIVNVNYPKRSKAVINEAYFRTPSTTDYNGVYQGYYIDFEAKETKNKTSFPLNNIHDHQVEHMKNAYQQKGIVFLMIRFKTLDEVYLLPYSKFEVFWKRYKDNIKKSITVDEIRKNGYHIPYQYQPRLDYLKAVDKLILDESEDRV</sequence>